<sequence>MTTRKCNKFRKTSESEISLSLNLDGEGKSNIDTGIGFLNHMLNLMTKHGFLDLDIKAIGDLEVDAHHTVEDIGIVLGKALKEALGNKEKIKRYGTCFLPMDESLAFVSIDISGRAFLVYNCEFTVDKVGDMDTELVEEFLRAFAFNSEITLHTKILYGKNNHHMIEAIFKALGRAIKEAVLIDEKIKGVMSTKGII</sequence>
<protein>
    <recommendedName>
        <fullName evidence="1">Imidazoleglycerol-phosphate dehydratase</fullName>
        <shortName evidence="1">IGPD</shortName>
        <ecNumber evidence="1">4.2.1.19</ecNumber>
    </recommendedName>
</protein>
<dbReference type="EC" id="4.2.1.19" evidence="1"/>
<dbReference type="EMBL" id="CP000382">
    <property type="protein sequence ID" value="ABK62118.1"/>
    <property type="molecule type" value="Genomic_DNA"/>
</dbReference>
<dbReference type="RefSeq" id="WP_011721168.1">
    <property type="nucleotide sequence ID" value="NC_008593.1"/>
</dbReference>
<dbReference type="SMR" id="A0PXP6"/>
<dbReference type="STRING" id="386415.NT01CX_1064"/>
<dbReference type="KEGG" id="cno:NT01CX_1064"/>
<dbReference type="eggNOG" id="COG0131">
    <property type="taxonomic scope" value="Bacteria"/>
</dbReference>
<dbReference type="HOGENOM" id="CLU_044308_3_0_9"/>
<dbReference type="UniPathway" id="UPA00031">
    <property type="reaction ID" value="UER00011"/>
</dbReference>
<dbReference type="Proteomes" id="UP000008220">
    <property type="component" value="Chromosome"/>
</dbReference>
<dbReference type="GO" id="GO:0005737">
    <property type="term" value="C:cytoplasm"/>
    <property type="evidence" value="ECO:0007669"/>
    <property type="project" value="UniProtKB-SubCell"/>
</dbReference>
<dbReference type="GO" id="GO:0004424">
    <property type="term" value="F:imidazoleglycerol-phosphate dehydratase activity"/>
    <property type="evidence" value="ECO:0007669"/>
    <property type="project" value="UniProtKB-UniRule"/>
</dbReference>
<dbReference type="GO" id="GO:0000105">
    <property type="term" value="P:L-histidine biosynthetic process"/>
    <property type="evidence" value="ECO:0007669"/>
    <property type="project" value="UniProtKB-UniRule"/>
</dbReference>
<dbReference type="CDD" id="cd07914">
    <property type="entry name" value="IGPD"/>
    <property type="match status" value="1"/>
</dbReference>
<dbReference type="FunFam" id="3.30.230.40:FF:000001">
    <property type="entry name" value="Imidazoleglycerol-phosphate dehydratase HisB"/>
    <property type="match status" value="1"/>
</dbReference>
<dbReference type="FunFam" id="3.30.230.40:FF:000003">
    <property type="entry name" value="Imidazoleglycerol-phosphate dehydratase HisB"/>
    <property type="match status" value="1"/>
</dbReference>
<dbReference type="Gene3D" id="3.30.230.40">
    <property type="entry name" value="Imidazole glycerol phosphate dehydratase, domain 1"/>
    <property type="match status" value="2"/>
</dbReference>
<dbReference type="HAMAP" id="MF_00076">
    <property type="entry name" value="HisB"/>
    <property type="match status" value="1"/>
</dbReference>
<dbReference type="InterPro" id="IPR038494">
    <property type="entry name" value="IGPD_sf"/>
</dbReference>
<dbReference type="InterPro" id="IPR000807">
    <property type="entry name" value="ImidazoleglycerolP_deHydtase"/>
</dbReference>
<dbReference type="InterPro" id="IPR020565">
    <property type="entry name" value="ImidazoleglycerP_deHydtase_CS"/>
</dbReference>
<dbReference type="InterPro" id="IPR020568">
    <property type="entry name" value="Ribosomal_Su5_D2-typ_SF"/>
</dbReference>
<dbReference type="NCBIfam" id="NF002107">
    <property type="entry name" value="PRK00951.1-2"/>
    <property type="match status" value="1"/>
</dbReference>
<dbReference type="NCBIfam" id="NF002111">
    <property type="entry name" value="PRK00951.2-1"/>
    <property type="match status" value="1"/>
</dbReference>
<dbReference type="NCBIfam" id="NF002114">
    <property type="entry name" value="PRK00951.2-4"/>
    <property type="match status" value="1"/>
</dbReference>
<dbReference type="PANTHER" id="PTHR23133:SF2">
    <property type="entry name" value="IMIDAZOLEGLYCEROL-PHOSPHATE DEHYDRATASE"/>
    <property type="match status" value="1"/>
</dbReference>
<dbReference type="PANTHER" id="PTHR23133">
    <property type="entry name" value="IMIDAZOLEGLYCEROL-PHOSPHATE DEHYDRATASE HIS7"/>
    <property type="match status" value="1"/>
</dbReference>
<dbReference type="Pfam" id="PF00475">
    <property type="entry name" value="IGPD"/>
    <property type="match status" value="1"/>
</dbReference>
<dbReference type="SUPFAM" id="SSF54211">
    <property type="entry name" value="Ribosomal protein S5 domain 2-like"/>
    <property type="match status" value="2"/>
</dbReference>
<dbReference type="PROSITE" id="PS00954">
    <property type="entry name" value="IGP_DEHYDRATASE_1"/>
    <property type="match status" value="1"/>
</dbReference>
<dbReference type="PROSITE" id="PS00955">
    <property type="entry name" value="IGP_DEHYDRATASE_2"/>
    <property type="match status" value="1"/>
</dbReference>
<comment type="catalytic activity">
    <reaction evidence="1">
        <text>D-erythro-1-(imidazol-4-yl)glycerol 3-phosphate = 3-(imidazol-4-yl)-2-oxopropyl phosphate + H2O</text>
        <dbReference type="Rhea" id="RHEA:11040"/>
        <dbReference type="ChEBI" id="CHEBI:15377"/>
        <dbReference type="ChEBI" id="CHEBI:57766"/>
        <dbReference type="ChEBI" id="CHEBI:58278"/>
        <dbReference type="EC" id="4.2.1.19"/>
    </reaction>
</comment>
<comment type="pathway">
    <text evidence="1">Amino-acid biosynthesis; L-histidine biosynthesis; L-histidine from 5-phospho-alpha-D-ribose 1-diphosphate: step 6/9.</text>
</comment>
<comment type="subcellular location">
    <subcellularLocation>
        <location evidence="1">Cytoplasm</location>
    </subcellularLocation>
</comment>
<comment type="similarity">
    <text evidence="1">Belongs to the imidazoleglycerol-phosphate dehydratase family.</text>
</comment>
<organism>
    <name type="scientific">Clostridium novyi (strain NT)</name>
    <dbReference type="NCBI Taxonomy" id="386415"/>
    <lineage>
        <taxon>Bacteria</taxon>
        <taxon>Bacillati</taxon>
        <taxon>Bacillota</taxon>
        <taxon>Clostridia</taxon>
        <taxon>Eubacteriales</taxon>
        <taxon>Clostridiaceae</taxon>
        <taxon>Clostridium</taxon>
    </lineage>
</organism>
<name>HIS7_CLONN</name>
<feature type="chain" id="PRO_1000010272" description="Imidazoleglycerol-phosphate dehydratase">
    <location>
        <begin position="1"/>
        <end position="196"/>
    </location>
</feature>
<evidence type="ECO:0000255" key="1">
    <source>
        <dbReference type="HAMAP-Rule" id="MF_00076"/>
    </source>
</evidence>
<proteinExistence type="inferred from homology"/>
<keyword id="KW-0028">Amino-acid biosynthesis</keyword>
<keyword id="KW-0963">Cytoplasm</keyword>
<keyword id="KW-0368">Histidine biosynthesis</keyword>
<keyword id="KW-0456">Lyase</keyword>
<keyword id="KW-1185">Reference proteome</keyword>
<reference key="1">
    <citation type="journal article" date="2006" name="Nat. Biotechnol.">
        <title>The genome and transcriptomes of the anti-tumor agent Clostridium novyi-NT.</title>
        <authorList>
            <person name="Bettegowda C."/>
            <person name="Huang X."/>
            <person name="Lin J."/>
            <person name="Cheong I."/>
            <person name="Kohli M."/>
            <person name="Szabo S.A."/>
            <person name="Zhang X."/>
            <person name="Diaz L.A. Jr."/>
            <person name="Velculescu V.E."/>
            <person name="Parmigiani G."/>
            <person name="Kinzler K.W."/>
            <person name="Vogelstein B."/>
            <person name="Zhou S."/>
        </authorList>
    </citation>
    <scope>NUCLEOTIDE SEQUENCE [LARGE SCALE GENOMIC DNA]</scope>
    <source>
        <strain>NT</strain>
    </source>
</reference>
<gene>
    <name evidence="1" type="primary">hisB</name>
    <name type="ordered locus">NT01CX_1064</name>
</gene>
<accession>A0PXP6</accession>